<organism>
    <name type="scientific">Human papillomavirus type 34</name>
    <dbReference type="NCBI Taxonomy" id="333764"/>
    <lineage>
        <taxon>Viruses</taxon>
        <taxon>Monodnaviria</taxon>
        <taxon>Shotokuvirae</taxon>
        <taxon>Cossaviricota</taxon>
        <taxon>Papovaviricetes</taxon>
        <taxon>Zurhausenvirales</taxon>
        <taxon>Papillomaviridae</taxon>
        <taxon>Firstpapillomavirinae</taxon>
        <taxon>Alphapapillomavirus</taxon>
        <taxon>Alphapapillomavirus 11</taxon>
    </lineage>
</organism>
<feature type="chain" id="PRO_0000133518" description="Major capsid protein L1">
    <location>
        <begin position="1"/>
        <end position="528"/>
    </location>
</feature>
<feature type="region of interest" description="Disordered" evidence="2">
    <location>
        <begin position="504"/>
        <end position="528"/>
    </location>
</feature>
<feature type="compositionally biased region" description="Low complexity" evidence="2">
    <location>
        <begin position="508"/>
        <end position="519"/>
    </location>
</feature>
<feature type="disulfide bond" description="Interchain (with C-453)" evidence="1">
    <location>
        <position position="200"/>
    </location>
</feature>
<feature type="disulfide bond" description="Interchain (with C-200)" evidence="1">
    <location>
        <position position="453"/>
    </location>
</feature>
<sequence length="528" mass="59048">MGPILYCILACMSFHANVNVCHIFLQMWRPTEAKVYLPPVSVSKVVSTEEYVTRTNIYYYAGSTRLLAVGHPYYPIKDTNGKRKIAVPKVSGLQYRVFRIRLPDPNKFGFPDASFYNPDKERLVWACAGVEVGRGQPLGIGTSGNPFMNKLEDTENAAKYIGGNIADSRECMSVDYKQTQLCIVGCKPPLGEHWGTGTPCGTQNAGECPPLELKNTTIQDGDMIDVGFGAMDFKALQANKSDVPIDISNTICKYPDYLGMAADPYGDSMWFYIRREQMFVRHLFNRAGTVGDAIPDDLMIKGTGNTASPSSCVFYPTPSGSMVSSDAQIFNKPYWLQKAQGQNNGICWHNQLFLTVVDTTRSTNFSVCVGTQSTSTTAPYANSNFKEYLRHAEEYDLQFVFQLCKINLTTDVMTYIHSMSSSILEQWNFGLTPPPSGTLEETYRYVTSQAITCQRPQPPKETEDPYGKMTFWEVDLKEKFSAELDQFALGRKFLLQLGMRARPRLQASKRSAPSSSSTAPKKKRAKRI</sequence>
<protein>
    <recommendedName>
        <fullName evidence="1">Major capsid protein L1</fullName>
    </recommendedName>
</protein>
<comment type="function">
    <text evidence="1">Forms an icosahedral capsid with a T=7 symmetry and a 50 nm diameter. The capsid is composed of 72 pentamers linked to each other by disulfide bonds and associated with L2 proteins. Binds to heparan sulfate proteoglycans on cell surface of basal layer keratinocytes to provide initial virion attachment. This binding mediates a conformational change in the virus capsid that facilitates efficient infection. The virion enters the host cell via endocytosis. During virus trafficking, L1 protein dissociates from the viral DNA and the genomic DNA is released to the host nucleus. The virion assembly takes place within the cell nucleus. Encapsulates the genomic DNA together with protein L2.</text>
</comment>
<comment type="subunit">
    <text evidence="1">Self-assembles into homopentamers. The capsid has an icosahedral symmetry and consists of 72 capsomers, with each capsomer being a pentamer of L1. Interacts with the minor capsid protein L2; this interaction is necessary for viral genome encapsidation. Interacts with protein E2; this interaction enhances E2-dependent replication and transcription activation.</text>
</comment>
<comment type="subcellular location">
    <subcellularLocation>
        <location evidence="1">Virion</location>
    </subcellularLocation>
    <subcellularLocation>
        <location evidence="1">Host nucleus</location>
    </subcellularLocation>
</comment>
<comment type="similarity">
    <text evidence="1">Belongs to the papillomaviridae L1 protein family.</text>
</comment>
<evidence type="ECO:0000255" key="1">
    <source>
        <dbReference type="HAMAP-Rule" id="MF_04002"/>
    </source>
</evidence>
<evidence type="ECO:0000256" key="2">
    <source>
        <dbReference type="SAM" id="MobiDB-lite"/>
    </source>
</evidence>
<dbReference type="EMBL" id="X74476">
    <property type="protein sequence ID" value="CAA52560.1"/>
    <property type="molecule type" value="Genomic_DNA"/>
</dbReference>
<dbReference type="PIR" id="S36520">
    <property type="entry name" value="S36520"/>
</dbReference>
<dbReference type="RefSeq" id="NP_041812.1">
    <property type="nucleotide sequence ID" value="NC_001587.1"/>
</dbReference>
<dbReference type="SMR" id="P36738"/>
<dbReference type="GeneID" id="1489433"/>
<dbReference type="KEGG" id="vg:1489433"/>
<dbReference type="OrthoDB" id="5037at10239"/>
<dbReference type="Proteomes" id="UP000009171">
    <property type="component" value="Genome"/>
</dbReference>
<dbReference type="GO" id="GO:0042025">
    <property type="term" value="C:host cell nucleus"/>
    <property type="evidence" value="ECO:0007669"/>
    <property type="project" value="UniProtKB-SubCell"/>
</dbReference>
<dbReference type="GO" id="GO:0039620">
    <property type="term" value="C:T=7 icosahedral viral capsid"/>
    <property type="evidence" value="ECO:0007669"/>
    <property type="project" value="UniProtKB-UniRule"/>
</dbReference>
<dbReference type="GO" id="GO:0005198">
    <property type="term" value="F:structural molecule activity"/>
    <property type="evidence" value="ECO:0007669"/>
    <property type="project" value="UniProtKB-UniRule"/>
</dbReference>
<dbReference type="GO" id="GO:0075509">
    <property type="term" value="P:endocytosis involved in viral entry into host cell"/>
    <property type="evidence" value="ECO:0007669"/>
    <property type="project" value="UniProtKB-KW"/>
</dbReference>
<dbReference type="GO" id="GO:0019062">
    <property type="term" value="P:virion attachment to host cell"/>
    <property type="evidence" value="ECO:0007669"/>
    <property type="project" value="UniProtKB-UniRule"/>
</dbReference>
<dbReference type="Gene3D" id="2.60.175.20">
    <property type="entry name" value="Major capsid L1 (late) superfamily, Papillomavirus"/>
    <property type="match status" value="2"/>
</dbReference>
<dbReference type="HAMAP" id="MF_04002">
    <property type="entry name" value="PPV_L1"/>
    <property type="match status" value="1"/>
</dbReference>
<dbReference type="InterPro" id="IPR002210">
    <property type="entry name" value="Capsid_L1_Papillomavir"/>
</dbReference>
<dbReference type="InterPro" id="IPR036973">
    <property type="entry name" value="Capsid_L1_sf_Papillomavir"/>
</dbReference>
<dbReference type="InterPro" id="IPR011222">
    <property type="entry name" value="dsDNA_vir_gr_I_capsid"/>
</dbReference>
<dbReference type="Pfam" id="PF00500">
    <property type="entry name" value="Late_protein_L1"/>
    <property type="match status" value="1"/>
</dbReference>
<dbReference type="PRINTS" id="PR00865">
    <property type="entry name" value="HPVCAPSIDL1"/>
</dbReference>
<dbReference type="SUPFAM" id="SSF88648">
    <property type="entry name" value="Group I dsDNA viruses"/>
    <property type="match status" value="1"/>
</dbReference>
<keyword id="KW-0167">Capsid protein</keyword>
<keyword id="KW-1015">Disulfide bond</keyword>
<keyword id="KW-1048">Host nucleus</keyword>
<keyword id="KW-0945">Host-virus interaction</keyword>
<keyword id="KW-0426">Late protein</keyword>
<keyword id="KW-1185">Reference proteome</keyword>
<keyword id="KW-1145">T=7 icosahedral capsid protein</keyword>
<keyword id="KW-1161">Viral attachment to host cell</keyword>
<keyword id="KW-1162">Viral penetration into host cytoplasm</keyword>
<keyword id="KW-0946">Virion</keyword>
<keyword id="KW-1164">Virus endocytosis by host</keyword>
<keyword id="KW-1160">Virus entry into host cell</keyword>
<organismHost>
    <name type="scientific">Homo sapiens</name>
    <name type="common">Human</name>
    <dbReference type="NCBI Taxonomy" id="9606"/>
</organismHost>
<accession>P36738</accession>
<proteinExistence type="inferred from homology"/>
<gene>
    <name evidence="1" type="primary">L1</name>
</gene>
<name>VL1_HPV34</name>
<reference key="1">
    <citation type="journal article" date="1994" name="Curr. Top. Microbiol. Immunol.">
        <title>Primer-directed sequencing of human papillomavirus types.</title>
        <authorList>
            <person name="Delius H."/>
            <person name="Hofmann B."/>
        </authorList>
    </citation>
    <scope>NUCLEOTIDE SEQUENCE [GENOMIC DNA]</scope>
</reference>